<organism>
    <name type="scientific">Emericella nidulans (strain FGSC A4 / ATCC 38163 / CBS 112.46 / NRRL 194 / M139)</name>
    <name type="common">Aspergillus nidulans</name>
    <dbReference type="NCBI Taxonomy" id="227321"/>
    <lineage>
        <taxon>Eukaryota</taxon>
        <taxon>Fungi</taxon>
        <taxon>Dikarya</taxon>
        <taxon>Ascomycota</taxon>
        <taxon>Pezizomycotina</taxon>
        <taxon>Eurotiomycetes</taxon>
        <taxon>Eurotiomycetidae</taxon>
        <taxon>Eurotiales</taxon>
        <taxon>Aspergillaceae</taxon>
        <taxon>Aspergillus</taxon>
        <taxon>Aspergillus subgen. Nidulantes</taxon>
    </lineage>
</organism>
<protein>
    <recommendedName>
        <fullName>Heat shock protein 60</fullName>
    </recommendedName>
    <alternativeName>
        <fullName>60 kDa chaperonin</fullName>
    </alternativeName>
    <alternativeName>
        <fullName>Protein Cpn60</fullName>
    </alternativeName>
</protein>
<reference key="1">
    <citation type="journal article" date="2005" name="Nature">
        <title>Sequencing of Aspergillus nidulans and comparative analysis with A. fumigatus and A. oryzae.</title>
        <authorList>
            <person name="Galagan J.E."/>
            <person name="Calvo S.E."/>
            <person name="Cuomo C."/>
            <person name="Ma L.-J."/>
            <person name="Wortman J.R."/>
            <person name="Batzoglou S."/>
            <person name="Lee S.-I."/>
            <person name="Bastuerkmen M."/>
            <person name="Spevak C.C."/>
            <person name="Clutterbuck J."/>
            <person name="Kapitonov V."/>
            <person name="Jurka J."/>
            <person name="Scazzocchio C."/>
            <person name="Farman M.L."/>
            <person name="Butler J."/>
            <person name="Purcell S."/>
            <person name="Harris S."/>
            <person name="Braus G.H."/>
            <person name="Draht O."/>
            <person name="Busch S."/>
            <person name="D'Enfert C."/>
            <person name="Bouchier C."/>
            <person name="Goldman G.H."/>
            <person name="Bell-Pedersen D."/>
            <person name="Griffiths-Jones S."/>
            <person name="Doonan J.H."/>
            <person name="Yu J."/>
            <person name="Vienken K."/>
            <person name="Pain A."/>
            <person name="Freitag M."/>
            <person name="Selker E.U."/>
            <person name="Archer D.B."/>
            <person name="Penalva M.A."/>
            <person name="Oakley B.R."/>
            <person name="Momany M."/>
            <person name="Tanaka T."/>
            <person name="Kumagai T."/>
            <person name="Asai K."/>
            <person name="Machida M."/>
            <person name="Nierman W.C."/>
            <person name="Denning D.W."/>
            <person name="Caddick M.X."/>
            <person name="Hynes M."/>
            <person name="Paoletti M."/>
            <person name="Fischer R."/>
            <person name="Miller B.L."/>
            <person name="Dyer P.S."/>
            <person name="Sachs M.S."/>
            <person name="Osmani S.A."/>
            <person name="Birren B.W."/>
        </authorList>
    </citation>
    <scope>NUCLEOTIDE SEQUENCE [LARGE SCALE GENOMIC DNA]</scope>
    <source>
        <strain>FGSC A4 / ATCC 38163 / CBS 112.46 / NRRL 194 / M139</strain>
    </source>
</reference>
<reference key="2">
    <citation type="journal article" date="2009" name="Fungal Genet. Biol.">
        <title>The 2008 update of the Aspergillus nidulans genome annotation: a community effort.</title>
        <authorList>
            <person name="Wortman J.R."/>
            <person name="Gilsenan J.M."/>
            <person name="Joardar V."/>
            <person name="Deegan J."/>
            <person name="Clutterbuck J."/>
            <person name="Andersen M.R."/>
            <person name="Archer D."/>
            <person name="Bencina M."/>
            <person name="Braus G."/>
            <person name="Coutinho P."/>
            <person name="von Dohren H."/>
            <person name="Doonan J."/>
            <person name="Driessen A.J."/>
            <person name="Durek P."/>
            <person name="Espeso E."/>
            <person name="Fekete E."/>
            <person name="Flipphi M."/>
            <person name="Estrada C.G."/>
            <person name="Geysens S."/>
            <person name="Goldman G."/>
            <person name="de Groot P.W."/>
            <person name="Hansen K."/>
            <person name="Harris S.D."/>
            <person name="Heinekamp T."/>
            <person name="Helmstaedt K."/>
            <person name="Henrissat B."/>
            <person name="Hofmann G."/>
            <person name="Homan T."/>
            <person name="Horio T."/>
            <person name="Horiuchi H."/>
            <person name="James S."/>
            <person name="Jones M."/>
            <person name="Karaffa L."/>
            <person name="Karanyi Z."/>
            <person name="Kato M."/>
            <person name="Keller N."/>
            <person name="Kelly D.E."/>
            <person name="Kiel J.A."/>
            <person name="Kim J.M."/>
            <person name="van der Klei I.J."/>
            <person name="Klis F.M."/>
            <person name="Kovalchuk A."/>
            <person name="Krasevec N."/>
            <person name="Kubicek C.P."/>
            <person name="Liu B."/>
            <person name="Maccabe A."/>
            <person name="Meyer V."/>
            <person name="Mirabito P."/>
            <person name="Miskei M."/>
            <person name="Mos M."/>
            <person name="Mullins J."/>
            <person name="Nelson D.R."/>
            <person name="Nielsen J."/>
            <person name="Oakley B.R."/>
            <person name="Osmani S.A."/>
            <person name="Pakula T."/>
            <person name="Paszewski A."/>
            <person name="Paulsen I."/>
            <person name="Pilsyk S."/>
            <person name="Pocsi I."/>
            <person name="Punt P.J."/>
            <person name="Ram A.F."/>
            <person name="Ren Q."/>
            <person name="Robellet X."/>
            <person name="Robson G."/>
            <person name="Seiboth B."/>
            <person name="van Solingen P."/>
            <person name="Specht T."/>
            <person name="Sun J."/>
            <person name="Taheri-Talesh N."/>
            <person name="Takeshita N."/>
            <person name="Ussery D."/>
            <person name="vanKuyk P.A."/>
            <person name="Visser H."/>
            <person name="van de Vondervoort P.J."/>
            <person name="de Vries R.P."/>
            <person name="Walton J."/>
            <person name="Xiang X."/>
            <person name="Xiong Y."/>
            <person name="Zeng A.P."/>
            <person name="Brandt B.W."/>
            <person name="Cornell M.J."/>
            <person name="van den Hondel C.A."/>
            <person name="Visser J."/>
            <person name="Oliver S.G."/>
            <person name="Turner G."/>
        </authorList>
    </citation>
    <scope>GENOME REANNOTATION</scope>
    <source>
        <strain>FGSC A4 / ATCC 38163 / CBS 112.46 / NRRL 194 / M139</strain>
    </source>
</reference>
<reference key="3">
    <citation type="journal article" date="2007" name="Fungal Genet. Biol.">
        <title>Proteome map of Aspergillus nidulans during osmoadaptation.</title>
        <authorList>
            <person name="Kim Y."/>
            <person name="Nandakumar M.P."/>
            <person name="Marten M.R."/>
        </authorList>
    </citation>
    <scope>INDUCTION</scope>
    <scope>IDENTIFICATION BY MASS SPECTROMETRY</scope>
</reference>
<sequence>MQRALSSRTSVLSAASKRAAFTKPAGLNLQQQRFAHKELKFGVEARAQLLKGVDTLAKAVTSTLGPKGRNVLIESPYGSPKITKDGVTVAKAVQLQDKFENLGARLLQDVASKTNELAGDGTTTATVLARAIFSETVKNVAAGCNPMDLRRGIQAAVEAAVDYLQQNKRDITTGEEIAQVATISANGDTHVGKLISTAMERVGKEGVITVKEGKTLEDELEVTEGMRFDRGYTSPYFITDAKAQKVEFEKPLILLSEKKISAVQDIIPALEASTTLRRPLVIIAEDIEGEALAVCILNKLRGQLQVAAVKAPGFGDNRKSILGDLGVLTNGTVFTDELDIKLEKLTPDMLGSTGSITITKEDTIILNGEGSKDAIAQRCEQIRGVMADPTTSEYEKEKLQERLAKLSGGVAVIKVGGASEVEVGEKKDRVVDALNATRAAVEEGILPGGGTALLKAAANGLENVKPANFDQQLGVSIVKSAITRPARTIVENAGLEGSVIVGKLTDEFSKDFNRGFDSAKGEYVDMIAAGIVDPLKVVRTALVDASGVSSLLGTTEVAIVEAPEEKGPAAPGGMGGMGGMGGMGGGMF</sequence>
<dbReference type="EMBL" id="AACD01000104">
    <property type="protein sequence ID" value="EAA58064.1"/>
    <property type="molecule type" value="Genomic_DNA"/>
</dbReference>
<dbReference type="EMBL" id="BN001301">
    <property type="protein sequence ID" value="CBF70208.1"/>
    <property type="molecule type" value="Genomic_DNA"/>
</dbReference>
<dbReference type="RefSeq" id="XP_663693.1">
    <property type="nucleotide sequence ID" value="XM_658601.1"/>
</dbReference>
<dbReference type="SMR" id="Q5B041"/>
<dbReference type="FunCoup" id="Q5B041">
    <property type="interactions" value="1404"/>
</dbReference>
<dbReference type="STRING" id="227321.Q5B041"/>
<dbReference type="EnsemblFungi" id="CBF70208">
    <property type="protein sequence ID" value="CBF70208"/>
    <property type="gene ID" value="ANIA_06089"/>
</dbReference>
<dbReference type="KEGG" id="ani:ANIA_06089"/>
<dbReference type="VEuPathDB" id="FungiDB:AN6089"/>
<dbReference type="eggNOG" id="KOG0356">
    <property type="taxonomic scope" value="Eukaryota"/>
</dbReference>
<dbReference type="HOGENOM" id="CLU_016503_3_0_1"/>
<dbReference type="InParanoid" id="Q5B041"/>
<dbReference type="OMA" id="TDTDKME"/>
<dbReference type="OrthoDB" id="1733909at2759"/>
<dbReference type="Proteomes" id="UP000000560">
    <property type="component" value="Chromosome I"/>
</dbReference>
<dbReference type="GO" id="GO:0005743">
    <property type="term" value="C:mitochondrial inner membrane"/>
    <property type="evidence" value="ECO:0000318"/>
    <property type="project" value="GO_Central"/>
</dbReference>
<dbReference type="GO" id="GO:0005758">
    <property type="term" value="C:mitochondrial intermembrane space"/>
    <property type="evidence" value="ECO:0007669"/>
    <property type="project" value="EnsemblFungi"/>
</dbReference>
<dbReference type="GO" id="GO:0005759">
    <property type="term" value="C:mitochondrial matrix"/>
    <property type="evidence" value="ECO:0000318"/>
    <property type="project" value="GO_Central"/>
</dbReference>
<dbReference type="GO" id="GO:0042645">
    <property type="term" value="C:mitochondrial nucleoid"/>
    <property type="evidence" value="ECO:0007669"/>
    <property type="project" value="EnsemblFungi"/>
</dbReference>
<dbReference type="GO" id="GO:0071014">
    <property type="term" value="C:post-mRNA release spliceosomal complex"/>
    <property type="evidence" value="ECO:0007669"/>
    <property type="project" value="EnsemblFungi"/>
</dbReference>
<dbReference type="GO" id="GO:0005524">
    <property type="term" value="F:ATP binding"/>
    <property type="evidence" value="ECO:0007669"/>
    <property type="project" value="UniProtKB-KW"/>
</dbReference>
<dbReference type="GO" id="GO:0016887">
    <property type="term" value="F:ATP hydrolysis activity"/>
    <property type="evidence" value="ECO:0007669"/>
    <property type="project" value="EnsemblFungi"/>
</dbReference>
<dbReference type="GO" id="GO:0140662">
    <property type="term" value="F:ATP-dependent protein folding chaperone"/>
    <property type="evidence" value="ECO:0007669"/>
    <property type="project" value="InterPro"/>
</dbReference>
<dbReference type="GO" id="GO:0003688">
    <property type="term" value="F:DNA replication origin binding"/>
    <property type="evidence" value="ECO:0007669"/>
    <property type="project" value="EnsemblFungi"/>
</dbReference>
<dbReference type="GO" id="GO:0051087">
    <property type="term" value="F:protein-folding chaperone binding"/>
    <property type="evidence" value="ECO:0000318"/>
    <property type="project" value="GO_Central"/>
</dbReference>
<dbReference type="GO" id="GO:0003697">
    <property type="term" value="F:single-stranded DNA binding"/>
    <property type="evidence" value="ECO:0007669"/>
    <property type="project" value="EnsemblFungi"/>
</dbReference>
<dbReference type="GO" id="GO:0051082">
    <property type="term" value="F:unfolded protein binding"/>
    <property type="evidence" value="ECO:0007669"/>
    <property type="project" value="EnsemblFungi"/>
</dbReference>
<dbReference type="GO" id="GO:0006458">
    <property type="term" value="P:'de novo' protein folding"/>
    <property type="evidence" value="ECO:0007669"/>
    <property type="project" value="EnsemblFungi"/>
</dbReference>
<dbReference type="GO" id="GO:0071470">
    <property type="term" value="P:cellular response to osmotic stress"/>
    <property type="evidence" value="ECO:0000270"/>
    <property type="project" value="AspGD"/>
</dbReference>
<dbReference type="GO" id="GO:0051131">
    <property type="term" value="P:chaperone-mediated protein complex assembly"/>
    <property type="evidence" value="ECO:0007669"/>
    <property type="project" value="EnsemblFungi"/>
</dbReference>
<dbReference type="GO" id="GO:0000002">
    <property type="term" value="P:mitochondrial genome maintenance"/>
    <property type="evidence" value="ECO:0007669"/>
    <property type="project" value="EnsemblFungi"/>
</dbReference>
<dbReference type="GO" id="GO:0034514">
    <property type="term" value="P:mitochondrial unfolded protein response"/>
    <property type="evidence" value="ECO:0000318"/>
    <property type="project" value="GO_Central"/>
</dbReference>
<dbReference type="GO" id="GO:0007005">
    <property type="term" value="P:mitochondrion organization"/>
    <property type="evidence" value="ECO:0000318"/>
    <property type="project" value="GO_Central"/>
</dbReference>
<dbReference type="GO" id="GO:0006457">
    <property type="term" value="P:protein folding"/>
    <property type="evidence" value="ECO:0000318"/>
    <property type="project" value="GO_Central"/>
</dbReference>
<dbReference type="GO" id="GO:0045041">
    <property type="term" value="P:protein import into mitochondrial intermembrane space"/>
    <property type="evidence" value="ECO:0000318"/>
    <property type="project" value="GO_Central"/>
</dbReference>
<dbReference type="GO" id="GO:0042026">
    <property type="term" value="P:protein refolding"/>
    <property type="evidence" value="ECO:0007669"/>
    <property type="project" value="EnsemblFungi"/>
</dbReference>
<dbReference type="GO" id="GO:0050821">
    <property type="term" value="P:protein stabilization"/>
    <property type="evidence" value="ECO:0007669"/>
    <property type="project" value="EnsemblFungi"/>
</dbReference>
<dbReference type="CDD" id="cd03344">
    <property type="entry name" value="GroEL"/>
    <property type="match status" value="1"/>
</dbReference>
<dbReference type="FunFam" id="1.10.560.10:FF:000001">
    <property type="entry name" value="60 kDa chaperonin"/>
    <property type="match status" value="1"/>
</dbReference>
<dbReference type="FunFam" id="3.50.7.10:FF:000001">
    <property type="entry name" value="60 kDa chaperonin"/>
    <property type="match status" value="1"/>
</dbReference>
<dbReference type="Gene3D" id="3.50.7.10">
    <property type="entry name" value="GroEL"/>
    <property type="match status" value="1"/>
</dbReference>
<dbReference type="Gene3D" id="1.10.560.10">
    <property type="entry name" value="GroEL-like equatorial domain"/>
    <property type="match status" value="1"/>
</dbReference>
<dbReference type="Gene3D" id="3.30.260.10">
    <property type="entry name" value="TCP-1-like chaperonin intermediate domain"/>
    <property type="match status" value="1"/>
</dbReference>
<dbReference type="HAMAP" id="MF_00600">
    <property type="entry name" value="CH60"/>
    <property type="match status" value="1"/>
</dbReference>
<dbReference type="InterPro" id="IPR018370">
    <property type="entry name" value="Chaperonin_Cpn60_CS"/>
</dbReference>
<dbReference type="InterPro" id="IPR001844">
    <property type="entry name" value="Cpn60/GroEL"/>
</dbReference>
<dbReference type="InterPro" id="IPR002423">
    <property type="entry name" value="Cpn60/GroEL/TCP-1"/>
</dbReference>
<dbReference type="InterPro" id="IPR027409">
    <property type="entry name" value="GroEL-like_apical_dom_sf"/>
</dbReference>
<dbReference type="InterPro" id="IPR027413">
    <property type="entry name" value="GROEL-like_equatorial_sf"/>
</dbReference>
<dbReference type="InterPro" id="IPR027410">
    <property type="entry name" value="TCP-1-like_intermed_sf"/>
</dbReference>
<dbReference type="NCBIfam" id="TIGR02348">
    <property type="entry name" value="GroEL"/>
    <property type="match status" value="1"/>
</dbReference>
<dbReference type="NCBIfam" id="NF000592">
    <property type="entry name" value="PRK00013.1"/>
    <property type="match status" value="1"/>
</dbReference>
<dbReference type="NCBIfam" id="NF009487">
    <property type="entry name" value="PRK12849.1"/>
    <property type="match status" value="1"/>
</dbReference>
<dbReference type="NCBIfam" id="NF009488">
    <property type="entry name" value="PRK12850.1"/>
    <property type="match status" value="1"/>
</dbReference>
<dbReference type="NCBIfam" id="NF009489">
    <property type="entry name" value="PRK12851.1"/>
    <property type="match status" value="1"/>
</dbReference>
<dbReference type="PANTHER" id="PTHR45633">
    <property type="entry name" value="60 KDA HEAT SHOCK PROTEIN, MITOCHONDRIAL"/>
    <property type="match status" value="1"/>
</dbReference>
<dbReference type="Pfam" id="PF00118">
    <property type="entry name" value="Cpn60_TCP1"/>
    <property type="match status" value="1"/>
</dbReference>
<dbReference type="PRINTS" id="PR00298">
    <property type="entry name" value="CHAPERONIN60"/>
</dbReference>
<dbReference type="SUPFAM" id="SSF52029">
    <property type="entry name" value="GroEL apical domain-like"/>
    <property type="match status" value="1"/>
</dbReference>
<dbReference type="SUPFAM" id="SSF48592">
    <property type="entry name" value="GroEL equatorial domain-like"/>
    <property type="match status" value="1"/>
</dbReference>
<dbReference type="SUPFAM" id="SSF54849">
    <property type="entry name" value="GroEL-intermediate domain like"/>
    <property type="match status" value="1"/>
</dbReference>
<dbReference type="PROSITE" id="PS00296">
    <property type="entry name" value="CHAPERONINS_CPN60"/>
    <property type="match status" value="1"/>
</dbReference>
<proteinExistence type="evidence at protein level"/>
<gene>
    <name type="primary">hsp60</name>
    <name type="ORF">AN6089</name>
</gene>
<comment type="function">
    <text evidence="1">May participate in assembly and/or disassembly of proteins imported into the mitochondrion. HSP60 are ATPases and have affinity for unfolded proteins (By similarity). Involved in osmoadaptation.</text>
</comment>
<comment type="subcellular location">
    <subcellularLocation>
        <location evidence="4">Mitochondrion</location>
    </subcellularLocation>
</comment>
<comment type="induction">
    <text evidence="3">Up-regulated when grown with elevated levels of potassium chloride.</text>
</comment>
<comment type="similarity">
    <text evidence="4">Belongs to the chaperonin (HSP60) family.</text>
</comment>
<accession>Q5B041</accession>
<accession>C8V2L8</accession>
<feature type="transit peptide" description="Mitochondrion" evidence="2">
    <location>
        <begin position="1"/>
        <end position="34"/>
    </location>
</feature>
<feature type="chain" id="PRO_0000348279" description="Heat shock protein 60">
    <location>
        <begin position="35"/>
        <end position="588"/>
    </location>
</feature>
<evidence type="ECO:0000250" key="1"/>
<evidence type="ECO:0000255" key="2"/>
<evidence type="ECO:0000269" key="3">
    <source>
    </source>
</evidence>
<evidence type="ECO:0000305" key="4"/>
<keyword id="KW-0067">ATP-binding</keyword>
<keyword id="KW-0143">Chaperone</keyword>
<keyword id="KW-0496">Mitochondrion</keyword>
<keyword id="KW-0547">Nucleotide-binding</keyword>
<keyword id="KW-1185">Reference proteome</keyword>
<keyword id="KW-0346">Stress response</keyword>
<keyword id="KW-0809">Transit peptide</keyword>
<name>HSP60_EMENI</name>